<proteinExistence type="evidence at protein level"/>
<sequence>MSTFYVTAVPKSHSSLPKCQAMMSRTLLTGMAMYLDSSHAGAASMQVSWPPLLTSLGSKEMKSRWNWGSITCIMCFTCVGSQLSMSSSKASNFSGPLQLYQRGIGHITNPYRRPPAPAWPCSSSGTT</sequence>
<accession>D3ZGZ6</accession>
<accession>Q6BDA5</accession>
<keyword id="KW-1003">Cell membrane</keyword>
<keyword id="KW-0472">Membrane</keyword>
<keyword id="KW-1185">Reference proteome</keyword>
<keyword id="KW-0812">Transmembrane</keyword>
<keyword id="KW-1133">Transmembrane helix</keyword>
<reference key="1">
    <citation type="journal article" date="1998" name="Mol. Med.">
        <title>Molecular characterization of a dual endothelin-1/Angiotensin II receptor.</title>
        <authorList>
            <person name="Ruiz-Opazo N."/>
            <person name="Hirayama K."/>
            <person name="Akimoto K."/>
            <person name="Herrera V.L."/>
        </authorList>
    </citation>
    <scope>NUCLEOTIDE SEQUENCE [MRNA]</scope>
    <scope>FUNCTION</scope>
    <scope>SUBCELLULAR LOCATION</scope>
    <scope>TISSUE SPECIFICITY</scope>
    <scope>MUTAGENESIS OF ARG-64 AND TRP-65</scope>
    <source>
        <strain evidence="9">Sprague-Dawley</strain>
        <tissue evidence="7">Brain</tissue>
    </source>
</reference>
<reference key="2">
    <citation type="journal article" date="2005" name="Physiol. Genomics">
        <title>Sex-specific effects of dual ET-1/ANG II receptor (Dear) variants in Dahl salt-sensitive/resistant hypertension rat model.</title>
        <authorList>
            <person name="Kaneko Y."/>
            <person name="Herrera V.L."/>
            <person name="Didishvili T."/>
            <person name="Ruiz-Opazo N."/>
        </authorList>
    </citation>
    <scope>NUCLEOTIDE SEQUENCE [MRNA]</scope>
    <scope>FUNCTION</scope>
    <source>
        <strain evidence="6">Dahl salt-resistant</strain>
        <strain evidence="6">Dahl salt-sensitive</strain>
    </source>
</reference>
<reference key="3">
    <citation type="journal article" date="2004" name="Nature">
        <title>Genome sequence of the Brown Norway rat yields insights into mammalian evolution.</title>
        <authorList>
            <person name="Gibbs R.A."/>
            <person name="Weinstock G.M."/>
            <person name="Metzker M.L."/>
            <person name="Muzny D.M."/>
            <person name="Sodergren E.J."/>
            <person name="Scherer S."/>
            <person name="Scott G."/>
            <person name="Steffen D."/>
            <person name="Worley K.C."/>
            <person name="Burch P.E."/>
            <person name="Okwuonu G."/>
            <person name="Hines S."/>
            <person name="Lewis L."/>
            <person name="Deramo C."/>
            <person name="Delgado O."/>
            <person name="Dugan-Rocha S."/>
            <person name="Miner G."/>
            <person name="Morgan M."/>
            <person name="Hawes A."/>
            <person name="Gill R."/>
            <person name="Holt R.A."/>
            <person name="Adams M.D."/>
            <person name="Amanatides P.G."/>
            <person name="Baden-Tillson H."/>
            <person name="Barnstead M."/>
            <person name="Chin S."/>
            <person name="Evans C.A."/>
            <person name="Ferriera S."/>
            <person name="Fosler C."/>
            <person name="Glodek A."/>
            <person name="Gu Z."/>
            <person name="Jennings D."/>
            <person name="Kraft C.L."/>
            <person name="Nguyen T."/>
            <person name="Pfannkoch C.M."/>
            <person name="Sitter C."/>
            <person name="Sutton G.G."/>
            <person name="Venter J.C."/>
            <person name="Woodage T."/>
            <person name="Smith D."/>
            <person name="Lee H.-M."/>
            <person name="Gustafson E."/>
            <person name="Cahill P."/>
            <person name="Kana A."/>
            <person name="Doucette-Stamm L."/>
            <person name="Weinstock K."/>
            <person name="Fechtel K."/>
            <person name="Weiss R.B."/>
            <person name="Dunn D.M."/>
            <person name="Green E.D."/>
            <person name="Blakesley R.W."/>
            <person name="Bouffard G.G."/>
            <person name="De Jong P.J."/>
            <person name="Osoegawa K."/>
            <person name="Zhu B."/>
            <person name="Marra M."/>
            <person name="Schein J."/>
            <person name="Bosdet I."/>
            <person name="Fjell C."/>
            <person name="Jones S."/>
            <person name="Krzywinski M."/>
            <person name="Mathewson C."/>
            <person name="Siddiqui A."/>
            <person name="Wye N."/>
            <person name="McPherson J."/>
            <person name="Zhao S."/>
            <person name="Fraser C.M."/>
            <person name="Shetty J."/>
            <person name="Shatsman S."/>
            <person name="Geer K."/>
            <person name="Chen Y."/>
            <person name="Abramzon S."/>
            <person name="Nierman W.C."/>
            <person name="Havlak P.H."/>
            <person name="Chen R."/>
            <person name="Durbin K.J."/>
            <person name="Egan A."/>
            <person name="Ren Y."/>
            <person name="Song X.-Z."/>
            <person name="Li B."/>
            <person name="Liu Y."/>
            <person name="Qin X."/>
            <person name="Cawley S."/>
            <person name="Cooney A.J."/>
            <person name="D'Souza L.M."/>
            <person name="Martin K."/>
            <person name="Wu J.Q."/>
            <person name="Gonzalez-Garay M.L."/>
            <person name="Jackson A.R."/>
            <person name="Kalafus K.J."/>
            <person name="McLeod M.P."/>
            <person name="Milosavljevic A."/>
            <person name="Virk D."/>
            <person name="Volkov A."/>
            <person name="Wheeler D.A."/>
            <person name="Zhang Z."/>
            <person name="Bailey J.A."/>
            <person name="Eichler E.E."/>
            <person name="Tuzun E."/>
            <person name="Birney E."/>
            <person name="Mongin E."/>
            <person name="Ureta-Vidal A."/>
            <person name="Woodwark C."/>
            <person name="Zdobnov E."/>
            <person name="Bork P."/>
            <person name="Suyama M."/>
            <person name="Torrents D."/>
            <person name="Alexandersson M."/>
            <person name="Trask B.J."/>
            <person name="Young J.M."/>
            <person name="Huang H."/>
            <person name="Wang H."/>
            <person name="Xing H."/>
            <person name="Daniels S."/>
            <person name="Gietzen D."/>
            <person name="Schmidt J."/>
            <person name="Stevens K."/>
            <person name="Vitt U."/>
            <person name="Wingrove J."/>
            <person name="Camara F."/>
            <person name="Mar Alba M."/>
            <person name="Abril J.F."/>
            <person name="Guigo R."/>
            <person name="Smit A."/>
            <person name="Dubchak I."/>
            <person name="Rubin E.M."/>
            <person name="Couronne O."/>
            <person name="Poliakov A."/>
            <person name="Huebner N."/>
            <person name="Ganten D."/>
            <person name="Goesele C."/>
            <person name="Hummel O."/>
            <person name="Kreitler T."/>
            <person name="Lee Y.-A."/>
            <person name="Monti J."/>
            <person name="Schulz H."/>
            <person name="Zimdahl H."/>
            <person name="Himmelbauer H."/>
            <person name="Lehrach H."/>
            <person name="Jacob H.J."/>
            <person name="Bromberg S."/>
            <person name="Gullings-Handley J."/>
            <person name="Jensen-Seaman M.I."/>
            <person name="Kwitek A.E."/>
            <person name="Lazar J."/>
            <person name="Pasko D."/>
            <person name="Tonellato P.J."/>
            <person name="Twigger S."/>
            <person name="Ponting C.P."/>
            <person name="Duarte J.M."/>
            <person name="Rice S."/>
            <person name="Goodstadt L."/>
            <person name="Beatson S.A."/>
            <person name="Emes R.D."/>
            <person name="Winter E.E."/>
            <person name="Webber C."/>
            <person name="Brandt P."/>
            <person name="Nyakatura G."/>
            <person name="Adetobi M."/>
            <person name="Chiaromonte F."/>
            <person name="Elnitski L."/>
            <person name="Eswara P."/>
            <person name="Hardison R.C."/>
            <person name="Hou M."/>
            <person name="Kolbe D."/>
            <person name="Makova K."/>
            <person name="Miller W."/>
            <person name="Nekrutenko A."/>
            <person name="Riemer C."/>
            <person name="Schwartz S."/>
            <person name="Taylor J."/>
            <person name="Yang S."/>
            <person name="Zhang Y."/>
            <person name="Lindpaintner K."/>
            <person name="Andrews T.D."/>
            <person name="Caccamo M."/>
            <person name="Clamp M."/>
            <person name="Clarke L."/>
            <person name="Curwen V."/>
            <person name="Durbin R.M."/>
            <person name="Eyras E."/>
            <person name="Searle S.M."/>
            <person name="Cooper G.M."/>
            <person name="Batzoglou S."/>
            <person name="Brudno M."/>
            <person name="Sidow A."/>
            <person name="Stone E.A."/>
            <person name="Payseur B.A."/>
            <person name="Bourque G."/>
            <person name="Lopez-Otin C."/>
            <person name="Puente X.S."/>
            <person name="Chakrabarti K."/>
            <person name="Chatterji S."/>
            <person name="Dewey C."/>
            <person name="Pachter L."/>
            <person name="Bray N."/>
            <person name="Yap V.B."/>
            <person name="Caspi A."/>
            <person name="Tesler G."/>
            <person name="Pevzner P.A."/>
            <person name="Haussler D."/>
            <person name="Roskin K.M."/>
            <person name="Baertsch R."/>
            <person name="Clawson H."/>
            <person name="Furey T.S."/>
            <person name="Hinrichs A.S."/>
            <person name="Karolchik D."/>
            <person name="Kent W.J."/>
            <person name="Rosenbloom K.R."/>
            <person name="Trumbower H."/>
            <person name="Weirauch M."/>
            <person name="Cooper D.N."/>
            <person name="Stenson P.D."/>
            <person name="Ma B."/>
            <person name="Brent M."/>
            <person name="Arumugam M."/>
            <person name="Shteynberg D."/>
            <person name="Copley R.R."/>
            <person name="Taylor M.S."/>
            <person name="Riethman H."/>
            <person name="Mudunuri U."/>
            <person name="Peterson J."/>
            <person name="Guyer M."/>
            <person name="Felsenfeld A."/>
            <person name="Old S."/>
            <person name="Mockrin S."/>
            <person name="Collins F.S."/>
        </authorList>
    </citation>
    <scope>NUCLEOTIDE SEQUENCE [LARGE SCALE GENOMIC DNA]</scope>
    <source>
        <strain>Brown Norway</strain>
    </source>
</reference>
<protein>
    <recommendedName>
        <fullName evidence="1">Dual endothelin-1/VEGF signal peptide receptor</fullName>
        <shortName evidence="1">DEspR protein</shortName>
        <shortName evidence="1">Dual endothelin-1/VEGFsp receptor</shortName>
    </recommendedName>
    <alternativeName>
        <fullName evidence="7">Dual endothelin-1/angiotensin-2 receptor</fullName>
        <shortName evidence="7">Dear protein</shortName>
    </alternativeName>
    <alternativeName>
        <fullName evidence="1">FBXW7 antisense RNA 1 homolog</fullName>
    </alternativeName>
</protein>
<organism>
    <name type="scientific">Rattus norvegicus</name>
    <name type="common">Rat</name>
    <dbReference type="NCBI Taxonomy" id="10116"/>
    <lineage>
        <taxon>Eukaryota</taxon>
        <taxon>Metazoa</taxon>
        <taxon>Chordata</taxon>
        <taxon>Craniata</taxon>
        <taxon>Vertebrata</taxon>
        <taxon>Euteleostomi</taxon>
        <taxon>Mammalia</taxon>
        <taxon>Eutheria</taxon>
        <taxon>Euarchontoglires</taxon>
        <taxon>Glires</taxon>
        <taxon>Rodentia</taxon>
        <taxon>Myomorpha</taxon>
        <taxon>Muroidea</taxon>
        <taxon>Muridae</taxon>
        <taxon>Murinae</taxon>
        <taxon>Rattus</taxon>
    </lineage>
</organism>
<comment type="function">
    <text evidence="1 2 4 5">In the Dahl salt-resistant strain, acts as a dual receptor for both endothelin-1 and the signal sequence of vascular endothelial growth factor A and does not act as a receptor for angiotensin-2 (PubMed:15561758). Does not bind the VEGFA mature protein (By similarity). In the Dahl salt-sensitive strain, acts as a dual endothelin-1/angiotensin-2 receptor that is functionally coupled to a calcium-mobilizing transduction system, responding equivalently to both endothelin-1/EDN1 and angiotensin-2 peptides in a highly specific manner (PubMed:15561758, PubMed:9508787). May play a role in angiogenesis with a significant role in cardiovascular and neural development (By similarity).</text>
</comment>
<comment type="subcellular location">
    <subcellularLocation>
        <location evidence="5">Cell membrane</location>
        <topology evidence="1 3">Single-pass membrane protein</topology>
    </subcellularLocation>
</comment>
<comment type="tissue specificity">
    <text evidence="5">Prominently expressed in brain and heart tissues. Weakly expressed in aorta, adrenal gland, and lung tissues.</text>
</comment>
<comment type="caution">
    <text evidence="4">Acts as a dual endothelin-1/angiotensin-2 receptor only in the Dahl salt-sensitive strain (PubMed:15561758). In the Dahl salt-resistant strain and in other species including human and mouse, functions as a dual endothelin-1/VEGF signal peptide receptor and does not act as an angiotensin-2 receptor (PubMed:15561758).</text>
</comment>
<gene>
    <name evidence="1" type="primary">Fbxw7-as1</name>
    <name evidence="10" type="synonym">Dear</name>
</gene>
<dbReference type="EMBL" id="AY664492">
    <property type="protein sequence ID" value="AAT76519.1"/>
    <property type="molecule type" value="mRNA"/>
</dbReference>
<dbReference type="EMBL" id="AABR07012054">
    <property type="status" value="NOT_ANNOTATED_CDS"/>
    <property type="molecule type" value="Genomic_DNA"/>
</dbReference>
<dbReference type="RefSeq" id="NP_001004448.2">
    <property type="nucleotide sequence ID" value="NM_001004448.2"/>
</dbReference>
<dbReference type="PaxDb" id="10116-ENSRNOP00000039897"/>
<dbReference type="Ensembl" id="ENSRNOT00000042146.5">
    <property type="protein sequence ID" value="ENSRNOP00000039897.3"/>
    <property type="gene ID" value="ENSRNOG00000033147.5"/>
</dbReference>
<dbReference type="GeneID" id="446170"/>
<dbReference type="KEGG" id="rno:446170"/>
<dbReference type="AGR" id="RGD:1303105"/>
<dbReference type="CTD" id="446170"/>
<dbReference type="RGD" id="1303105">
    <property type="gene designation" value="Dear"/>
</dbReference>
<dbReference type="GeneTree" id="ENSGT00940000177316"/>
<dbReference type="HOGENOM" id="CLU_1969856_0_0_1"/>
<dbReference type="InParanoid" id="D3ZGZ6"/>
<dbReference type="OrthoDB" id="95419at9989"/>
<dbReference type="PRO" id="PR:D3ZGZ6"/>
<dbReference type="Proteomes" id="UP000002494">
    <property type="component" value="Chromosome 2"/>
</dbReference>
<dbReference type="Bgee" id="ENSRNOG00000033147">
    <property type="expression patterns" value="Expressed in frontal cortex"/>
</dbReference>
<dbReference type="GO" id="GO:0005886">
    <property type="term" value="C:plasma membrane"/>
    <property type="evidence" value="ECO:0000250"/>
    <property type="project" value="UniProtKB"/>
</dbReference>
<dbReference type="GO" id="GO:0004945">
    <property type="term" value="F:angiotensin type II receptor activity"/>
    <property type="evidence" value="ECO:0000315"/>
    <property type="project" value="RGD"/>
</dbReference>
<dbReference type="GO" id="GO:0004962">
    <property type="term" value="F:endothelin receptor activity"/>
    <property type="evidence" value="ECO:0000315"/>
    <property type="project" value="RGD"/>
</dbReference>
<dbReference type="GO" id="GO:0038085">
    <property type="term" value="F:vascular endothelial growth factor binding"/>
    <property type="evidence" value="ECO:0000250"/>
    <property type="project" value="UniProtKB"/>
</dbReference>
<dbReference type="GO" id="GO:0086100">
    <property type="term" value="P:endothelin receptor signaling pathway"/>
    <property type="evidence" value="ECO:0000250"/>
    <property type="project" value="UniProtKB"/>
</dbReference>
<dbReference type="GO" id="GO:0007186">
    <property type="term" value="P:G protein-coupled receptor signaling pathway"/>
    <property type="evidence" value="ECO:0000315"/>
    <property type="project" value="RGD"/>
</dbReference>
<dbReference type="GO" id="GO:0038084">
    <property type="term" value="P:vascular endothelial growth factor signaling pathway"/>
    <property type="evidence" value="ECO:0000250"/>
    <property type="project" value="UniProtKB"/>
</dbReference>
<feature type="chain" id="PRO_0000454052" description="Dual endothelin-1/VEGF signal peptide receptor">
    <location>
        <begin position="1"/>
        <end position="127"/>
    </location>
</feature>
<feature type="topological domain" description="Extracellular" evidence="1">
    <location>
        <begin position="1"/>
        <end position="69"/>
    </location>
</feature>
<feature type="transmembrane region" description="Helical" evidence="3">
    <location>
        <begin position="70"/>
        <end position="88"/>
    </location>
</feature>
<feature type="topological domain" description="Cytoplasmic" evidence="1">
    <location>
        <begin position="89"/>
        <end position="127"/>
    </location>
</feature>
<feature type="sequence variant" description="In strain: Dahl salt-resistant." evidence="4">
    <original>S</original>
    <variation>P</variation>
    <location>
        <position position="44"/>
    </location>
</feature>
<feature type="sequence variant" description="In strain: Dahl salt-resistant." evidence="4">
    <original>M</original>
    <variation>T</variation>
    <location>
        <position position="74"/>
    </location>
</feature>
<feature type="mutagenesis site" description="Abolishes binding with EDN1 without affecting angiotensin-2 peptide binding." evidence="5">
    <original>R</original>
    <variation>G</variation>
    <location>
        <position position="64"/>
    </location>
</feature>
<feature type="mutagenesis site" description="Abolishes binding with EDN1. Affects binding with angiotensin-2 peptide." evidence="5">
    <original>W</original>
    <variation>G</variation>
    <location>
        <position position="65"/>
    </location>
</feature>
<feature type="sequence conflict" description="In Ref. 1; AAT76519." evidence="8" ref="1">
    <original>F</original>
    <variation>L</variation>
    <location>
        <position position="4"/>
    </location>
</feature>
<evidence type="ECO:0000250" key="1">
    <source>
        <dbReference type="UniProtKB" id="B0L3A2"/>
    </source>
</evidence>
<evidence type="ECO:0000250" key="2">
    <source>
        <dbReference type="UniProtKB" id="Q2QKR2"/>
    </source>
</evidence>
<evidence type="ECO:0000255" key="3"/>
<evidence type="ECO:0000269" key="4">
    <source>
    </source>
</evidence>
<evidence type="ECO:0000269" key="5">
    <source>
    </source>
</evidence>
<evidence type="ECO:0000303" key="6">
    <source>
    </source>
</evidence>
<evidence type="ECO:0000303" key="7">
    <source>
    </source>
</evidence>
<evidence type="ECO:0000305" key="8"/>
<evidence type="ECO:0000312" key="9">
    <source>
        <dbReference type="EMBL" id="AAT76519.1"/>
    </source>
</evidence>
<evidence type="ECO:0000312" key="10">
    <source>
        <dbReference type="RGD" id="1303105"/>
    </source>
</evidence>
<name>DESPR_RAT</name>